<feature type="chain" id="PRO_1000122440" description="Homoserine kinase">
    <location>
        <begin position="1"/>
        <end position="309"/>
    </location>
</feature>
<feature type="binding site" evidence="1">
    <location>
        <begin position="91"/>
        <end position="101"/>
    </location>
    <ligand>
        <name>ATP</name>
        <dbReference type="ChEBI" id="CHEBI:30616"/>
    </ligand>
</feature>
<name>KHSE_SALHS</name>
<accession>B4TIA4</accession>
<sequence>MVKVYAPASSANMSVGFDVLGAAVTPVDGTLLGDVVSVEAADHFRLHNLGRFADKLPPEPRENIVYQCWERFCQALGKTIPVAMTLEKNMPIGSGLGSSACSVVAALVAMNEHCGKPLNDTRLLALMGELEGRISGSIHYDNVAPCFLGGMQLMIEENGIISQQVPGFDEWLWVLAYPGIKVSTAEARAILPAQYRRQDCIAHGRHLAGFIHACYSRQPQLAAALMKDVIAEPYRARLLPGFSQARQAVSEIGALASGISGSGPTLFALCDKPETAQRVADWLSKHYLQNQEGFVHICRLDTAGARVVG</sequence>
<keyword id="KW-0028">Amino-acid biosynthesis</keyword>
<keyword id="KW-0067">ATP-binding</keyword>
<keyword id="KW-0963">Cytoplasm</keyword>
<keyword id="KW-0418">Kinase</keyword>
<keyword id="KW-0547">Nucleotide-binding</keyword>
<keyword id="KW-0791">Threonine biosynthesis</keyword>
<keyword id="KW-0808">Transferase</keyword>
<dbReference type="EC" id="2.7.1.39" evidence="1"/>
<dbReference type="EMBL" id="CP001120">
    <property type="protein sequence ID" value="ACF69934.1"/>
    <property type="molecule type" value="Genomic_DNA"/>
</dbReference>
<dbReference type="RefSeq" id="WP_000241685.1">
    <property type="nucleotide sequence ID" value="NC_011083.1"/>
</dbReference>
<dbReference type="SMR" id="B4TIA4"/>
<dbReference type="KEGG" id="seh:SeHA_C0003"/>
<dbReference type="HOGENOM" id="CLU_041243_1_1_6"/>
<dbReference type="UniPathway" id="UPA00050">
    <property type="reaction ID" value="UER00064"/>
</dbReference>
<dbReference type="Proteomes" id="UP000001866">
    <property type="component" value="Chromosome"/>
</dbReference>
<dbReference type="GO" id="GO:0005737">
    <property type="term" value="C:cytoplasm"/>
    <property type="evidence" value="ECO:0007669"/>
    <property type="project" value="UniProtKB-SubCell"/>
</dbReference>
<dbReference type="GO" id="GO:0005524">
    <property type="term" value="F:ATP binding"/>
    <property type="evidence" value="ECO:0007669"/>
    <property type="project" value="UniProtKB-UniRule"/>
</dbReference>
<dbReference type="GO" id="GO:0004413">
    <property type="term" value="F:homoserine kinase activity"/>
    <property type="evidence" value="ECO:0007669"/>
    <property type="project" value="UniProtKB-UniRule"/>
</dbReference>
<dbReference type="GO" id="GO:0009088">
    <property type="term" value="P:threonine biosynthetic process"/>
    <property type="evidence" value="ECO:0007669"/>
    <property type="project" value="UniProtKB-UniRule"/>
</dbReference>
<dbReference type="FunFam" id="3.30.230.10:FF:000020">
    <property type="entry name" value="Homoserine kinase"/>
    <property type="match status" value="1"/>
</dbReference>
<dbReference type="FunFam" id="3.30.70.890:FF:000002">
    <property type="entry name" value="Homoserine kinase"/>
    <property type="match status" value="1"/>
</dbReference>
<dbReference type="Gene3D" id="3.30.230.10">
    <property type="match status" value="1"/>
</dbReference>
<dbReference type="Gene3D" id="3.30.70.890">
    <property type="entry name" value="GHMP kinase, C-terminal domain"/>
    <property type="match status" value="1"/>
</dbReference>
<dbReference type="HAMAP" id="MF_00384">
    <property type="entry name" value="Homoser_kinase"/>
    <property type="match status" value="1"/>
</dbReference>
<dbReference type="InterPro" id="IPR013750">
    <property type="entry name" value="GHMP_kinase_C_dom"/>
</dbReference>
<dbReference type="InterPro" id="IPR036554">
    <property type="entry name" value="GHMP_kinase_C_sf"/>
</dbReference>
<dbReference type="InterPro" id="IPR006204">
    <property type="entry name" value="GHMP_kinase_N_dom"/>
</dbReference>
<dbReference type="InterPro" id="IPR006203">
    <property type="entry name" value="GHMP_knse_ATP-bd_CS"/>
</dbReference>
<dbReference type="InterPro" id="IPR000870">
    <property type="entry name" value="Homoserine_kinase"/>
</dbReference>
<dbReference type="InterPro" id="IPR020568">
    <property type="entry name" value="Ribosomal_Su5_D2-typ_SF"/>
</dbReference>
<dbReference type="InterPro" id="IPR014721">
    <property type="entry name" value="Ribsml_uS5_D2-typ_fold_subgr"/>
</dbReference>
<dbReference type="NCBIfam" id="NF002288">
    <property type="entry name" value="PRK01212.1-4"/>
    <property type="match status" value="1"/>
</dbReference>
<dbReference type="NCBIfam" id="TIGR00191">
    <property type="entry name" value="thrB"/>
    <property type="match status" value="1"/>
</dbReference>
<dbReference type="PANTHER" id="PTHR20861:SF1">
    <property type="entry name" value="HOMOSERINE KINASE"/>
    <property type="match status" value="1"/>
</dbReference>
<dbReference type="PANTHER" id="PTHR20861">
    <property type="entry name" value="HOMOSERINE/4-DIPHOSPHOCYTIDYL-2-C-METHYL-D-ERYTHRITOL KINASE"/>
    <property type="match status" value="1"/>
</dbReference>
<dbReference type="Pfam" id="PF08544">
    <property type="entry name" value="GHMP_kinases_C"/>
    <property type="match status" value="1"/>
</dbReference>
<dbReference type="Pfam" id="PF00288">
    <property type="entry name" value="GHMP_kinases_N"/>
    <property type="match status" value="1"/>
</dbReference>
<dbReference type="PIRSF" id="PIRSF000676">
    <property type="entry name" value="Homoser_kin"/>
    <property type="match status" value="1"/>
</dbReference>
<dbReference type="PRINTS" id="PR00958">
    <property type="entry name" value="HOMSERKINASE"/>
</dbReference>
<dbReference type="SUPFAM" id="SSF55060">
    <property type="entry name" value="GHMP Kinase, C-terminal domain"/>
    <property type="match status" value="1"/>
</dbReference>
<dbReference type="SUPFAM" id="SSF54211">
    <property type="entry name" value="Ribosomal protein S5 domain 2-like"/>
    <property type="match status" value="1"/>
</dbReference>
<dbReference type="PROSITE" id="PS00627">
    <property type="entry name" value="GHMP_KINASES_ATP"/>
    <property type="match status" value="1"/>
</dbReference>
<proteinExistence type="inferred from homology"/>
<comment type="function">
    <text evidence="1">Catalyzes the ATP-dependent phosphorylation of L-homoserine to L-homoserine phosphate.</text>
</comment>
<comment type="catalytic activity">
    <reaction evidence="1">
        <text>L-homoserine + ATP = O-phospho-L-homoserine + ADP + H(+)</text>
        <dbReference type="Rhea" id="RHEA:13985"/>
        <dbReference type="ChEBI" id="CHEBI:15378"/>
        <dbReference type="ChEBI" id="CHEBI:30616"/>
        <dbReference type="ChEBI" id="CHEBI:57476"/>
        <dbReference type="ChEBI" id="CHEBI:57590"/>
        <dbReference type="ChEBI" id="CHEBI:456216"/>
        <dbReference type="EC" id="2.7.1.39"/>
    </reaction>
</comment>
<comment type="pathway">
    <text evidence="1">Amino-acid biosynthesis; L-threonine biosynthesis; L-threonine from L-aspartate: step 4/5.</text>
</comment>
<comment type="subcellular location">
    <subcellularLocation>
        <location evidence="1">Cytoplasm</location>
    </subcellularLocation>
</comment>
<comment type="similarity">
    <text evidence="1">Belongs to the GHMP kinase family. Homoserine kinase subfamily.</text>
</comment>
<organism>
    <name type="scientific">Salmonella heidelberg (strain SL476)</name>
    <dbReference type="NCBI Taxonomy" id="454169"/>
    <lineage>
        <taxon>Bacteria</taxon>
        <taxon>Pseudomonadati</taxon>
        <taxon>Pseudomonadota</taxon>
        <taxon>Gammaproteobacteria</taxon>
        <taxon>Enterobacterales</taxon>
        <taxon>Enterobacteriaceae</taxon>
        <taxon>Salmonella</taxon>
    </lineage>
</organism>
<protein>
    <recommendedName>
        <fullName evidence="1">Homoserine kinase</fullName>
        <shortName evidence="1">HK</shortName>
        <shortName evidence="1">HSK</shortName>
        <ecNumber evidence="1">2.7.1.39</ecNumber>
    </recommendedName>
</protein>
<gene>
    <name evidence="1" type="primary">thrB</name>
    <name type="ordered locus">SeHA_C0003</name>
</gene>
<evidence type="ECO:0000255" key="1">
    <source>
        <dbReference type="HAMAP-Rule" id="MF_00384"/>
    </source>
</evidence>
<reference key="1">
    <citation type="journal article" date="2011" name="J. Bacteriol.">
        <title>Comparative genomics of 28 Salmonella enterica isolates: evidence for CRISPR-mediated adaptive sublineage evolution.</title>
        <authorList>
            <person name="Fricke W.F."/>
            <person name="Mammel M.K."/>
            <person name="McDermott P.F."/>
            <person name="Tartera C."/>
            <person name="White D.G."/>
            <person name="Leclerc J.E."/>
            <person name="Ravel J."/>
            <person name="Cebula T.A."/>
        </authorList>
    </citation>
    <scope>NUCLEOTIDE SEQUENCE [LARGE SCALE GENOMIC DNA]</scope>
    <source>
        <strain>SL476</strain>
    </source>
</reference>